<comment type="function">
    <text evidence="3 4 7">Cytochrome P450 monooxygenase; part of the gene cluster that mediates the biosynthesis of the mycotoxin lucilactaene and the lucilactaene-related compound NG-391 that act as cell cycle inhibitors with potent growth inhibitory activity against malarial parasites, moderate growth inhibitory activity against cancer cells, and no activity against bacteria and fungi (PubMed:32043422, PubMed:35484225). Within the pathway, LUC2 performs C-20 methyl group hydroxylation of several intermediates (PubMed:35484225). LUC2 does not perform the full oxidation of the C-20 methyl group into carboxylic acid, which is a prerequisite for the final methylation step (PubMed:35484225). The pathway begins with the hybrid PKS-NRPS synthetase LUC5 which is responsible for the condensation of one acetyl-coenzyme A (CoA) unit with six malonyl-CoA units and the amide linkage of the arising heptaketide and homoserine, subsequently releasing the first intermediate prelucilactaene B. Both the cytochrome P450 monooxygenase LUC2 and the hydrolase LUC6 function in parallel in modification of prelucilactaene B. LUC6 may catalyze the 2-pyrrolidone ring formation to form prelucilactaene C from prelucilactaene B, followed by C-15 hydroxylation by the same enzyme to give prelucilactaene D, which is then converted to prelucilactaene E by epoxidation, and finally to prelucilactaene F by cyclization. Prelucilactane D, prelucilactaene E, and prelucilactaene F can be converted to dihydrolucilactaene, NG391, and lucilactaene, respectively, via C-20 methyl group hydroxylation by the cytochrome P450 monooxygenase LUC2. However, LUC2, unlike FUS8 in fusarin C biosynthesis, is not enough for the full oxidation of the C-20 methyl group into carboxylic acid, which is a prerequisite for the final methylation step. The aldehyde dehydrogenase LUC3 is involved in the biosynthesis by further oxidation of the C-20 alcoholic analog prelucilactaene G into a carboxylic derivative. This unidentified carboxylic derivative may be converted to demethyllucilactaene. As the last step, the methyltransferase LUC1 methylates the hydroxyl group at C-21 of demethyllucilactaene to generate lucilactaene (Probable).</text>
</comment>
<comment type="cofactor">
    <cofactor evidence="1">
        <name>heme</name>
        <dbReference type="ChEBI" id="CHEBI:30413"/>
    </cofactor>
</comment>
<comment type="pathway">
    <text evidence="4">Mycotoxin biosynthesis.</text>
</comment>
<comment type="subcellular location">
    <subcellularLocation>
        <location evidence="2">Membrane</location>
        <topology evidence="2">Single-pass membrane protein</topology>
    </subcellularLocation>
</comment>
<comment type="disruption phenotype">
    <text evidence="4">Abolishes the production of lucilactaene and NG-391, and leads to the accumulation of prelucilactaene A, prelucilactaene B, and two isomeric mixtures of prelucilactaene E, and prelucilactaene F.</text>
</comment>
<comment type="similarity">
    <text evidence="6">Belongs to the cytochrome P450 family.</text>
</comment>
<keyword id="KW-0349">Heme</keyword>
<keyword id="KW-0408">Iron</keyword>
<keyword id="KW-0472">Membrane</keyword>
<keyword id="KW-0479">Metal-binding</keyword>
<keyword id="KW-0503">Monooxygenase</keyword>
<keyword id="KW-0560">Oxidoreductase</keyword>
<keyword id="KW-0812">Transmembrane</keyword>
<keyword id="KW-1133">Transmembrane helix</keyword>
<sequence length="509" mass="57154">MVAQPSPIVGRLKLPESMPSLVSLEELTATKVLVTFLTIVIIAPRVFTVIKNAFSPISSIPGPLLNKLSPWPLTIATIKGTSHHFARSLHEKYGPIVVLAPGMVAVADTKEIKRIIQTEDWTKSEAIYGNFRQDPQRPTLLAYTDKKAYAKRKRMLSSMFGIKYIRSMEPIMMTCVEAAVRQLNKFCDEGTQGVAVVDMQHLIHSLAIDIIGITTFGGSLNVVDNGSHPLPSRLKAGLRIAGLMQLIPWIRFIPFLPTRDPYVDRFTYDIVDGRRQELESSQHSDLLQKLVEASDDSPGSDFRTSDVQDESVVMLTAGSETTANAELFTLMMLLKNPKVMKKLVDEVDQWYPPSEPDRQTDCGYSQAGMVYLQACIDETMRLVPGQATGSPRETSKDDVVLGYRIPAGTTVFPNTQEGHTQDAHWEEPQKFVPERWLEAQATNVPYWPFSAGSRVCIGKHFAFQEMHLTLVTLLRKFKFEYVDGQDESTVFRVAQQLKAESYRMKVSRR</sequence>
<protein>
    <recommendedName>
        <fullName evidence="5">Cytochrome P450 monooxygenase LUC2</fullName>
        <ecNumber evidence="4">1.-.-.-</ecNumber>
    </recommendedName>
    <alternativeName>
        <fullName evidence="5">Lucilactaene biosynthesis cluster protein 2</fullName>
    </alternativeName>
</protein>
<dbReference type="EC" id="1.-.-.-" evidence="4"/>
<dbReference type="EMBL" id="LC515193">
    <property type="protein sequence ID" value="BBQ09591.1"/>
    <property type="molecule type" value="Genomic_DNA"/>
</dbReference>
<dbReference type="SMR" id="A0A6J4BC30"/>
<dbReference type="GO" id="GO:0016020">
    <property type="term" value="C:membrane"/>
    <property type="evidence" value="ECO:0007669"/>
    <property type="project" value="UniProtKB-SubCell"/>
</dbReference>
<dbReference type="GO" id="GO:0020037">
    <property type="term" value="F:heme binding"/>
    <property type="evidence" value="ECO:0007669"/>
    <property type="project" value="InterPro"/>
</dbReference>
<dbReference type="GO" id="GO:0005506">
    <property type="term" value="F:iron ion binding"/>
    <property type="evidence" value="ECO:0007669"/>
    <property type="project" value="InterPro"/>
</dbReference>
<dbReference type="GO" id="GO:0004497">
    <property type="term" value="F:monooxygenase activity"/>
    <property type="evidence" value="ECO:0007669"/>
    <property type="project" value="UniProtKB-KW"/>
</dbReference>
<dbReference type="GO" id="GO:0016705">
    <property type="term" value="F:oxidoreductase activity, acting on paired donors, with incorporation or reduction of molecular oxygen"/>
    <property type="evidence" value="ECO:0007669"/>
    <property type="project" value="InterPro"/>
</dbReference>
<dbReference type="Gene3D" id="1.10.630.10">
    <property type="entry name" value="Cytochrome P450"/>
    <property type="match status" value="1"/>
</dbReference>
<dbReference type="InterPro" id="IPR001128">
    <property type="entry name" value="Cyt_P450"/>
</dbReference>
<dbReference type="InterPro" id="IPR017972">
    <property type="entry name" value="Cyt_P450_CS"/>
</dbReference>
<dbReference type="InterPro" id="IPR002401">
    <property type="entry name" value="Cyt_P450_E_grp-I"/>
</dbReference>
<dbReference type="InterPro" id="IPR036396">
    <property type="entry name" value="Cyt_P450_sf"/>
</dbReference>
<dbReference type="InterPro" id="IPR050121">
    <property type="entry name" value="Cytochrome_P450_monoxygenase"/>
</dbReference>
<dbReference type="PANTHER" id="PTHR24305">
    <property type="entry name" value="CYTOCHROME P450"/>
    <property type="match status" value="1"/>
</dbReference>
<dbReference type="PANTHER" id="PTHR24305:SF166">
    <property type="entry name" value="CYTOCHROME P450 12A4, MITOCHONDRIAL-RELATED"/>
    <property type="match status" value="1"/>
</dbReference>
<dbReference type="Pfam" id="PF00067">
    <property type="entry name" value="p450"/>
    <property type="match status" value="1"/>
</dbReference>
<dbReference type="PRINTS" id="PR00463">
    <property type="entry name" value="EP450I"/>
</dbReference>
<dbReference type="PRINTS" id="PR00385">
    <property type="entry name" value="P450"/>
</dbReference>
<dbReference type="SUPFAM" id="SSF48264">
    <property type="entry name" value="Cytochrome P450"/>
    <property type="match status" value="1"/>
</dbReference>
<dbReference type="PROSITE" id="PS00086">
    <property type="entry name" value="CYTOCHROME_P450"/>
    <property type="match status" value="1"/>
</dbReference>
<organism>
    <name type="scientific">Fusarium sp</name>
    <dbReference type="NCBI Taxonomy" id="29916"/>
    <lineage>
        <taxon>Eukaryota</taxon>
        <taxon>Fungi</taxon>
        <taxon>Dikarya</taxon>
        <taxon>Ascomycota</taxon>
        <taxon>Pezizomycotina</taxon>
        <taxon>Sordariomycetes</taxon>
        <taxon>Hypocreomycetidae</taxon>
        <taxon>Hypocreales</taxon>
        <taxon>Nectriaceae</taxon>
        <taxon>Fusarium</taxon>
    </lineage>
</organism>
<feature type="chain" id="PRO_0000454634" description="Cytochrome P450 monooxygenase LUC2">
    <location>
        <begin position="1"/>
        <end position="509"/>
    </location>
</feature>
<feature type="transmembrane region" description="Helical" evidence="2">
    <location>
        <begin position="30"/>
        <end position="50"/>
    </location>
</feature>
<feature type="binding site" description="axial binding residue" evidence="1">
    <location>
        <position position="456"/>
    </location>
    <ligand>
        <name>heme</name>
        <dbReference type="ChEBI" id="CHEBI:30413"/>
    </ligand>
    <ligandPart>
        <name>Fe</name>
        <dbReference type="ChEBI" id="CHEBI:18248"/>
    </ligandPart>
</feature>
<evidence type="ECO:0000250" key="1">
    <source>
        <dbReference type="UniProtKB" id="P04798"/>
    </source>
</evidence>
<evidence type="ECO:0000255" key="2"/>
<evidence type="ECO:0000269" key="3">
    <source>
    </source>
</evidence>
<evidence type="ECO:0000269" key="4">
    <source>
    </source>
</evidence>
<evidence type="ECO:0000303" key="5">
    <source>
    </source>
</evidence>
<evidence type="ECO:0000305" key="6"/>
<evidence type="ECO:0000305" key="7">
    <source>
    </source>
</evidence>
<gene>
    <name evidence="5" type="primary">LUC2</name>
</gene>
<accession>A0A6J4BC30</accession>
<name>LUC2_FUSSX</name>
<proteinExistence type="evidence at protein level"/>
<reference key="1">
    <citation type="journal article" date="2020" name="Biosci. Biotechnol. Biochem.">
        <title>Biosynthetic gene cluster identification and biological activity of lucilactaene from Fusarium sp. RK97-94.</title>
        <authorList>
            <person name="Kato S."/>
            <person name="Motoyama T."/>
            <person name="Futamura Y."/>
            <person name="Uramoto M."/>
            <person name="Nogawa T."/>
            <person name="Hayashi T."/>
            <person name="Hirota H."/>
            <person name="Tanaka A."/>
            <person name="Takahashi-Ando N."/>
            <person name="Kamakura T."/>
            <person name="Osada H."/>
        </authorList>
    </citation>
    <scope>NUCLEOTIDE SEQUENCE [GENOMIC DNA]</scope>
    <scope>FUNCTION</scope>
    <source>
        <strain>RK97-94</strain>
    </source>
</reference>
<reference key="2">
    <citation type="journal article" date="2022" name="J. Antibiot.">
        <title>Isolation of new lucilactaene derivatives from P450 monooxygenase and aldehyde dehydrogenase knockout Fusarium sp. RK97-94 strains and their biological activities.</title>
        <authorList>
            <person name="Abdelhakim I.A."/>
            <person name="Motoyama T."/>
            <person name="Nogawa T."/>
            <person name="Mahmud F.B."/>
            <person name="Futamura Y."/>
            <person name="Takahashi S."/>
            <person name="Osada H."/>
        </authorList>
    </citation>
    <scope>FUNCTION</scope>
    <scope>DISRUPTION PHENOTYPE</scope>
    <scope>CATALYTIC ACTIVITY</scope>
    <scope>PATHWAY</scope>
</reference>